<accession>Q8CG09</accession>
<accession>Q63346</accession>
<accession>Q810E4</accession>
<accession>Q810G9</accession>
<accession>Q9JHS0</accession>
<comment type="function">
    <text evidence="2 3 8 9">Mediates export of organic anions and drugs from the cytoplasm. Mediates ATP-dependent transport of glutathione and glutathione conjugates, leukotriene C4, estradiol-17-beta-o-glucuronide, methotrexate, antiviral drugs and other xenobiotics. Confers resistance to anticancer drugs by decreasing accumulation of drug in cells, and by mediating ATP- and GSH-dependent drug export. Hydrolyzes ATP with low efficiency (PubMed:15129170). Catalyzes the export of sphingosine 1-phosphate from mast cells independently of their degranulation (PubMed:17050692). Participates in inflammatory response by allowing export of leukotriene C4 from leukotriene C4-synthesizing cells (By similarity). Exports S-geranylgeranyl-glutathione (GGG) in lymphoid cells and stromal compartments of lymphoid organs. ABCC1 (via extracellular transport) with GGT5 (via GGG catabolism) establish GGG gradients within lymphoid tissues to position P2RY8-positive lymphocytes at germinal centers in lymphoid follicles and restrict their chemotactic transmigration from blood vessels to the bone marrow parenchyma (By similarity). Mediates basolateral export of GSH-conjugated R- and S-prostaglandin A2 diastereomers in polarized epithelial cells (By similarity).</text>
</comment>
<comment type="catalytic activity">
    <reaction evidence="3">
        <text>ATP + H2O + xenobioticSide 1 = ADP + phosphate + xenobioticSide 2.</text>
        <dbReference type="EC" id="7.6.2.2"/>
    </reaction>
</comment>
<comment type="catalytic activity">
    <reaction evidence="2">
        <text>an S-substituted glutathione(in) + ATP + H2O = an S-substituted glutathione(out) + ADP + phosphate + H(+)</text>
        <dbReference type="Rhea" id="RHEA:19121"/>
        <dbReference type="ChEBI" id="CHEBI:15377"/>
        <dbReference type="ChEBI" id="CHEBI:15378"/>
        <dbReference type="ChEBI" id="CHEBI:30616"/>
        <dbReference type="ChEBI" id="CHEBI:43474"/>
        <dbReference type="ChEBI" id="CHEBI:90779"/>
        <dbReference type="ChEBI" id="CHEBI:456216"/>
        <dbReference type="EC" id="7.6.2.3"/>
    </reaction>
    <physiologicalReaction direction="left-to-right" evidence="2">
        <dbReference type="Rhea" id="RHEA:19122"/>
    </physiologicalReaction>
</comment>
<comment type="catalytic activity">
    <reaction evidence="9">
        <text>sphing-4-enine 1-phosphate(in) + ATP + H2O = sphing-4-enine 1-phosphate(out) + ADP + phosphate + H(+)</text>
        <dbReference type="Rhea" id="RHEA:38951"/>
        <dbReference type="ChEBI" id="CHEBI:15377"/>
        <dbReference type="ChEBI" id="CHEBI:15378"/>
        <dbReference type="ChEBI" id="CHEBI:30616"/>
        <dbReference type="ChEBI" id="CHEBI:43474"/>
        <dbReference type="ChEBI" id="CHEBI:60119"/>
        <dbReference type="ChEBI" id="CHEBI:456216"/>
    </reaction>
    <physiologicalReaction direction="left-to-right" evidence="9">
        <dbReference type="Rhea" id="RHEA:38952"/>
    </physiologicalReaction>
</comment>
<comment type="catalytic activity">
    <reaction evidence="3">
        <text>leukotriene C4(in) + ATP + H2O = leukotriene C4(out) + ADP + phosphate + H(+)</text>
        <dbReference type="Rhea" id="RHEA:38963"/>
        <dbReference type="ChEBI" id="CHEBI:15377"/>
        <dbReference type="ChEBI" id="CHEBI:15378"/>
        <dbReference type="ChEBI" id="CHEBI:30616"/>
        <dbReference type="ChEBI" id="CHEBI:43474"/>
        <dbReference type="ChEBI" id="CHEBI:57973"/>
        <dbReference type="ChEBI" id="CHEBI:456216"/>
    </reaction>
    <physiologicalReaction direction="left-to-right" evidence="3">
        <dbReference type="Rhea" id="RHEA:38964"/>
    </physiologicalReaction>
</comment>
<comment type="catalytic activity">
    <reaction evidence="3">
        <text>17beta-estradiol 17-O-(beta-D-glucuronate)(in) + ATP + H2O = 17beta-estradiol 17-O-(beta-D-glucuronate)(out) + ADP + phosphate + H(+)</text>
        <dbReference type="Rhea" id="RHEA:60128"/>
        <dbReference type="ChEBI" id="CHEBI:15377"/>
        <dbReference type="ChEBI" id="CHEBI:15378"/>
        <dbReference type="ChEBI" id="CHEBI:30616"/>
        <dbReference type="ChEBI" id="CHEBI:43474"/>
        <dbReference type="ChEBI" id="CHEBI:82961"/>
        <dbReference type="ChEBI" id="CHEBI:456216"/>
    </reaction>
    <physiologicalReaction direction="left-to-right" evidence="3">
        <dbReference type="Rhea" id="RHEA:60129"/>
    </physiologicalReaction>
</comment>
<comment type="catalytic activity">
    <reaction evidence="3">
        <text>daunorubicin(in) + ATP + H2O = daunorubicin(out) + ADP + phosphate + H(+)</text>
        <dbReference type="Rhea" id="RHEA:33147"/>
        <dbReference type="ChEBI" id="CHEBI:15377"/>
        <dbReference type="ChEBI" id="CHEBI:15378"/>
        <dbReference type="ChEBI" id="CHEBI:30616"/>
        <dbReference type="ChEBI" id="CHEBI:43474"/>
        <dbReference type="ChEBI" id="CHEBI:64677"/>
        <dbReference type="ChEBI" id="CHEBI:456216"/>
    </reaction>
    <physiologicalReaction direction="left-to-right" evidence="3">
        <dbReference type="Rhea" id="RHEA:33148"/>
    </physiologicalReaction>
</comment>
<comment type="catalytic activity">
    <reaction evidence="3">
        <text>vincristine(in) + ATP + H2O = vincristine(out) + ADP + phosphate + H(+)</text>
        <dbReference type="Rhea" id="RHEA:60160"/>
        <dbReference type="ChEBI" id="CHEBI:15377"/>
        <dbReference type="ChEBI" id="CHEBI:15378"/>
        <dbReference type="ChEBI" id="CHEBI:30616"/>
        <dbReference type="ChEBI" id="CHEBI:43474"/>
        <dbReference type="ChEBI" id="CHEBI:143658"/>
        <dbReference type="ChEBI" id="CHEBI:456216"/>
    </reaction>
    <physiologicalReaction direction="left-to-right" evidence="3">
        <dbReference type="Rhea" id="RHEA:60161"/>
    </physiologicalReaction>
</comment>
<comment type="catalytic activity">
    <reaction evidence="3">
        <text>2',3'-cGAMP(in) + ATP + H2O = 2',3'-cGAMP(out) + ADP + phosphate + H(+)</text>
        <dbReference type="Rhea" id="RHEA:74887"/>
        <dbReference type="ChEBI" id="CHEBI:15377"/>
        <dbReference type="ChEBI" id="CHEBI:15378"/>
        <dbReference type="ChEBI" id="CHEBI:30616"/>
        <dbReference type="ChEBI" id="CHEBI:43474"/>
        <dbReference type="ChEBI" id="CHEBI:143093"/>
        <dbReference type="ChEBI" id="CHEBI:456216"/>
    </reaction>
</comment>
<comment type="catalytic activity">
    <reaction evidence="2">
        <text>S-[(2E,6E,10E)-geranylgeranyl]-L-glutathione(in) + ATP + H2O = S-[(2E,6E,10E)-geranylgeranyl]-L-glutathione(out) + ADP + phosphate + H(+)</text>
        <dbReference type="Rhea" id="RHEA:81611"/>
        <dbReference type="ChEBI" id="CHEBI:15377"/>
        <dbReference type="ChEBI" id="CHEBI:15378"/>
        <dbReference type="ChEBI" id="CHEBI:30616"/>
        <dbReference type="ChEBI" id="CHEBI:43474"/>
        <dbReference type="ChEBI" id="CHEBI:156326"/>
        <dbReference type="ChEBI" id="CHEBI:456216"/>
    </reaction>
    <physiologicalReaction direction="left-to-right" evidence="3">
        <dbReference type="Rhea" id="RHEA:81612"/>
    </physiologicalReaction>
</comment>
<comment type="catalytic activity">
    <reaction evidence="3">
        <text>prostaglandin A2-S-(R)-glutathione(in) + ATP + H2O = prostaglandin A2-S-(R)-glutathione(out) + ADP + phosphate + H(+)</text>
        <dbReference type="Rhea" id="RHEA:81695"/>
        <dbReference type="ChEBI" id="CHEBI:15377"/>
        <dbReference type="ChEBI" id="CHEBI:15378"/>
        <dbReference type="ChEBI" id="CHEBI:30616"/>
        <dbReference type="ChEBI" id="CHEBI:43474"/>
        <dbReference type="ChEBI" id="CHEBI:133768"/>
        <dbReference type="ChEBI" id="CHEBI:456216"/>
    </reaction>
    <physiologicalReaction direction="left-to-right" evidence="3">
        <dbReference type="Rhea" id="RHEA:81696"/>
    </physiologicalReaction>
</comment>
<comment type="catalytic activity">
    <reaction evidence="3">
        <text>prostaglandin A2-S-(S)-glutathione(in) + ATP + H2O = prostaglandin A2-S-(S)-glutathione(out) + ADP + phosphate + H(+)</text>
        <dbReference type="Rhea" id="RHEA:81699"/>
        <dbReference type="ChEBI" id="CHEBI:15377"/>
        <dbReference type="ChEBI" id="CHEBI:15378"/>
        <dbReference type="ChEBI" id="CHEBI:30616"/>
        <dbReference type="ChEBI" id="CHEBI:43474"/>
        <dbReference type="ChEBI" id="CHEBI:133769"/>
        <dbReference type="ChEBI" id="CHEBI:456216"/>
    </reaction>
    <physiologicalReaction direction="left-to-right" evidence="3">
        <dbReference type="Rhea" id="RHEA:81700"/>
    </physiologicalReaction>
</comment>
<comment type="activity regulation">
    <text evidence="3 9">MK 571 inhibits sphingosine 1-phosphate and leukotriene C4 export.</text>
</comment>
<comment type="subcellular location">
    <subcellularLocation>
        <location evidence="8">Cell membrane</location>
        <topology evidence="4">Multi-pass membrane protein</topology>
    </subcellularLocation>
    <subcellularLocation>
        <location evidence="3">Basolateral cell membrane</location>
        <topology evidence="4">Multi-pass membrane protein</topology>
    </subcellularLocation>
</comment>
<comment type="alternative products">
    <event type="alternative splicing"/>
    <isoform>
        <id>Q8CG09-1</id>
        <name>1</name>
        <sequence type="displayed"/>
    </isoform>
    <isoform>
        <id>Q8CG09-2</id>
        <name>2</name>
        <sequence type="described" ref="VSP_017015"/>
    </isoform>
</comment>
<comment type="tissue specificity">
    <text evidence="7">Skeletal muscle, brain, heart, spleen, lung and kidney.</text>
</comment>
<comment type="PTM">
    <text>Glycosylated.</text>
</comment>
<comment type="similarity">
    <text evidence="11">Belongs to the ABC transporter superfamily. ABCC family. Conjugate transporter (TC 3.A.1.208) subfamily.</text>
</comment>
<sequence>MALSSFCSSDGSDPLWDWNVTWHTSNPDFTKCFQNTVLTWVPCFYLWSCFPLYFLYLSRHDRGYIQMTHLNKAKTALGFFLWIICWADLFYSFWERSQGMLLAPVLLVSPTLLGITMLLATFLIQFERRKGVQSSGIMLTFWLVALLCALAILRSKIISALKKDAQVDMFRDSAFYLYFTLVFIQLVLSCFSDSSPLFSETVRDPNPCPESSASFLSRITFWWITGMMVQGYRQPLKSSDLWSLNKEDTSEEVVPVLVNNWKKECVKSRKQPVRIVYAPPKDPTKPKGSSQLDVNEEVEALIVKSSHKDRDPSLFKVLYKTFGPYFLMSFLYKALHDLMMFAGPEILELIINFVNDREAPDWQGYLYTALLFVSACLQTLALHQYFHICFVTGMRIKTAVVGAVYRKALVITNSARKSSTVGEIVNLMSVDAQRFMDLATYINMIWSAPLQVTLALYFLWLNLGPSVLAGVAVMILMVPFNAVMAMKTKTYQVAHMKSKDNRIKLMNEILNGIKVLKLYAWELAFQDKVMNIRQEELKVLKKSAYLAAVGTFTWVCTPFLVALSTFAVFVTVDEKNILDAKKAFVSLALFNILRFPLNILPMVISSIVQASVSLKRLRIFLSHEELEPDSIERWSIKDGGGMNSITVKNATFTWARDEPPTLNGITFAIPDGALVAVVGQVGCGKSSLLSALLAEMDKVEGHVTLKGSVAYVPQQAWIQNDSLRENILFGRPLQEHCYKAVMEACALLPDLEILPSGDLTEIGEKGVNLSGGQKQRVSLARAVYCNSDIYLLDDPLSAVDAHVGKHIFEKVVGPMGLLKNKTRILVTHGISYLPQVDVIIVMSGGKISEMGSYQELLDRDGAFAEFVRTYANTEQDLASEDDSKNGVSGLGKESKPVENGILVTDAVGKPLQRHLSNSSSHSVVTNQQHSSTAELQKSGVKEETWKLMEADKAQTGQVKLSVYWNYMKAIGLCISFLSIFLFLCNHVSALASNYWLSLWTDDRPAVNGTQENRNFRLSVYGALGILQGVAVFGYSMAVSIGGIFASRRLHLDLLQNVLRSPMSFFERTPSGNLVNRFSKELDTVDSMIPQVIKMFMGSLFSVIGAVIIILLATPIAAVIIPPLGLVYFFVQRFYVASSRQLKRLESVSRSPVYSHFNETLLGVSVIRAFEEQERFIRQSDLKVDENQKAYYPSIVANRWLAVRLECVGNCIVLFAALFAVISRHSLSAGLVGLSVSYSLQITAYLNWLVRMSSEMETNIVAVERLKEYSETEKEASWQIQETAPPSTWPHSGRVEFRDYCLRYREDLDLVLKHINVTIEGGEKVGIVGRTGAGKSSLTLGLFRINESAEGEIIIDGINIAKIGLHNLRFKITIIPQDPVLFSGSLRMNLDPFSQYSDEEVWMALELAHLKGFVSALPDKLNHECAEGGENLSVGQRQLVCLARALLRKTKILVLDEATAAVDLETDDLIQSTIRTQFEDSTVLTIAHRLNTIMDYTRVIVLDKGEIRECGAPSELLQQRGVFYSMAKDAGLV</sequence>
<dbReference type="EC" id="7.6.2.2" evidence="3"/>
<dbReference type="EC" id="7.6.2.3" evidence="2"/>
<dbReference type="EMBL" id="AY170916">
    <property type="protein sequence ID" value="AAN86532.1"/>
    <property type="molecule type" value="mRNA"/>
</dbReference>
<dbReference type="EMBL" id="AF487549">
    <property type="protein sequence ID" value="AAO85437.1"/>
    <property type="molecule type" value="mRNA"/>
</dbReference>
<dbReference type="EMBL" id="AY174892">
    <property type="protein sequence ID" value="AAO44983.1"/>
    <property type="molecule type" value="mRNA"/>
</dbReference>
<dbReference type="EMBL" id="AJ277881">
    <property type="protein sequence ID" value="CAB97204.1"/>
    <property type="molecule type" value="mRNA"/>
</dbReference>
<dbReference type="EMBL" id="X96394">
    <property type="protein sequence ID" value="CAA65258.1"/>
    <property type="molecule type" value="mRNA"/>
</dbReference>
<dbReference type="RefSeq" id="NP_071617.2">
    <molecule id="Q8CG09-1"/>
    <property type="nucleotide sequence ID" value="NM_022281.2"/>
</dbReference>
<dbReference type="SMR" id="Q8CG09"/>
<dbReference type="FunCoup" id="Q8CG09">
    <property type="interactions" value="1700"/>
</dbReference>
<dbReference type="STRING" id="10116.ENSRNOP00000044445"/>
<dbReference type="ChEMBL" id="CHEMBL5680"/>
<dbReference type="SwissLipids" id="SLP:000000405"/>
<dbReference type="GlyCosmos" id="Q8CG09">
    <property type="glycosylation" value="1 site, No reported glycans"/>
</dbReference>
<dbReference type="GlyGen" id="Q8CG09">
    <property type="glycosylation" value="1 site"/>
</dbReference>
<dbReference type="iPTMnet" id="Q8CG09"/>
<dbReference type="PhosphoSitePlus" id="Q8CG09"/>
<dbReference type="SwissPalm" id="Q8CG09"/>
<dbReference type="jPOST" id="Q8CG09"/>
<dbReference type="PaxDb" id="10116-ENSRNOP00000041695"/>
<dbReference type="Ensembl" id="ENSRNOT00000044108.6">
    <molecule id="Q8CG09-1"/>
    <property type="protein sequence ID" value="ENSRNOP00000044445.6"/>
    <property type="gene ID" value="ENSRNOG00000022305.6"/>
</dbReference>
<dbReference type="GeneID" id="24565"/>
<dbReference type="KEGG" id="rno:24565"/>
<dbReference type="UCSC" id="RGD:3112">
    <molecule id="Q8CG09-1"/>
    <property type="organism name" value="rat"/>
</dbReference>
<dbReference type="AGR" id="RGD:3112"/>
<dbReference type="CTD" id="4363"/>
<dbReference type="RGD" id="3112">
    <property type="gene designation" value="Abcc1"/>
</dbReference>
<dbReference type="eggNOG" id="KOG0054">
    <property type="taxonomic scope" value="Eukaryota"/>
</dbReference>
<dbReference type="GeneTree" id="ENSGT00940000160271"/>
<dbReference type="InParanoid" id="Q8CG09"/>
<dbReference type="OMA" id="CFETGMR"/>
<dbReference type="OrthoDB" id="6500128at2759"/>
<dbReference type="PhylomeDB" id="Q8CG09"/>
<dbReference type="Reactome" id="R-RNO-1660661">
    <property type="pathway name" value="Sphingolipid de novo biosynthesis"/>
</dbReference>
<dbReference type="Reactome" id="R-RNO-189483">
    <property type="pathway name" value="Heme degradation"/>
</dbReference>
<dbReference type="Reactome" id="R-RNO-2142691">
    <property type="pathway name" value="Synthesis of Leukotrienes (LT) and Eoxins (EX)"/>
</dbReference>
<dbReference type="Reactome" id="R-RNO-382556">
    <property type="pathway name" value="ABC-family proteins mediated transport"/>
</dbReference>
<dbReference type="Reactome" id="R-RNO-9707564">
    <property type="pathway name" value="Cytoprotection by HMOX1"/>
</dbReference>
<dbReference type="Reactome" id="R-RNO-9753281">
    <property type="pathway name" value="Paracetamol ADME"/>
</dbReference>
<dbReference type="Reactome" id="R-RNO-9758890">
    <property type="pathway name" value="Transport of RCbl within the body"/>
</dbReference>
<dbReference type="PRO" id="PR:Q8CG09"/>
<dbReference type="Proteomes" id="UP000002494">
    <property type="component" value="Chromosome 10"/>
</dbReference>
<dbReference type="GO" id="GO:0016324">
    <property type="term" value="C:apical plasma membrane"/>
    <property type="evidence" value="ECO:0000266"/>
    <property type="project" value="RGD"/>
</dbReference>
<dbReference type="GO" id="GO:0009925">
    <property type="term" value="C:basal plasma membrane"/>
    <property type="evidence" value="ECO:0000314"/>
    <property type="project" value="ARUK-UCL"/>
</dbReference>
<dbReference type="GO" id="GO:0016323">
    <property type="term" value="C:basolateral plasma membrane"/>
    <property type="evidence" value="ECO:0000314"/>
    <property type="project" value="ARUK-UCL"/>
</dbReference>
<dbReference type="GO" id="GO:0016328">
    <property type="term" value="C:lateral plasma membrane"/>
    <property type="evidence" value="ECO:0000266"/>
    <property type="project" value="RGD"/>
</dbReference>
<dbReference type="GO" id="GO:0005886">
    <property type="term" value="C:plasma membrane"/>
    <property type="evidence" value="ECO:0000266"/>
    <property type="project" value="RGD"/>
</dbReference>
<dbReference type="GO" id="GO:0015431">
    <property type="term" value="F:ABC-type glutathione S-conjugate transporter activity"/>
    <property type="evidence" value="ECO:0000250"/>
    <property type="project" value="UniProtKB"/>
</dbReference>
<dbReference type="GO" id="GO:0140359">
    <property type="term" value="F:ABC-type transporter activity"/>
    <property type="evidence" value="ECO:0000250"/>
    <property type="project" value="UniProtKB"/>
</dbReference>
<dbReference type="GO" id="GO:0015420">
    <property type="term" value="F:ABC-type vitamin B12 transporter activity"/>
    <property type="evidence" value="ECO:0000266"/>
    <property type="project" value="RGD"/>
</dbReference>
<dbReference type="GO" id="GO:0008559">
    <property type="term" value="F:ABC-type xenobiotic transporter activity"/>
    <property type="evidence" value="ECO:0000314"/>
    <property type="project" value="RGD"/>
</dbReference>
<dbReference type="GO" id="GO:0042887">
    <property type="term" value="F:amide transmembrane transporter activity"/>
    <property type="evidence" value="ECO:0000314"/>
    <property type="project" value="RGD"/>
</dbReference>
<dbReference type="GO" id="GO:0005524">
    <property type="term" value="F:ATP binding"/>
    <property type="evidence" value="ECO:0007669"/>
    <property type="project" value="UniProtKB-KW"/>
</dbReference>
<dbReference type="GO" id="GO:0016887">
    <property type="term" value="F:ATP hydrolysis activity"/>
    <property type="evidence" value="ECO:0007669"/>
    <property type="project" value="InterPro"/>
</dbReference>
<dbReference type="GO" id="GO:0034040">
    <property type="term" value="F:ATPase-coupled lipid transmembrane transporter activity"/>
    <property type="evidence" value="ECO:0000314"/>
    <property type="project" value="RGD"/>
</dbReference>
<dbReference type="GO" id="GO:0046943">
    <property type="term" value="F:carboxylic acid transmembrane transporter activity"/>
    <property type="evidence" value="ECO:0000266"/>
    <property type="project" value="RGD"/>
</dbReference>
<dbReference type="GO" id="GO:0015562">
    <property type="term" value="F:efflux transmembrane transporter activity"/>
    <property type="evidence" value="ECO:0000314"/>
    <property type="project" value="RGD"/>
</dbReference>
<dbReference type="GO" id="GO:0034634">
    <property type="term" value="F:glutathione transmembrane transporter activity"/>
    <property type="evidence" value="ECO:0000315"/>
    <property type="project" value="RGD"/>
</dbReference>
<dbReference type="GO" id="GO:0005324">
    <property type="term" value="F:long-chain fatty acid transmembrane transporter activity"/>
    <property type="evidence" value="ECO:0000314"/>
    <property type="project" value="RGD"/>
</dbReference>
<dbReference type="GO" id="GO:0016491">
    <property type="term" value="F:oxidoreductase activity"/>
    <property type="evidence" value="ECO:0007669"/>
    <property type="project" value="InterPro"/>
</dbReference>
<dbReference type="GO" id="GO:0042910">
    <property type="term" value="F:xenobiotic transmembrane transporter activity"/>
    <property type="evidence" value="ECO:0000250"/>
    <property type="project" value="UniProtKB"/>
</dbReference>
<dbReference type="GO" id="GO:0048708">
    <property type="term" value="P:astrocyte differentiation"/>
    <property type="evidence" value="ECO:0000315"/>
    <property type="project" value="RGD"/>
</dbReference>
<dbReference type="GO" id="GO:1905039">
    <property type="term" value="P:carboxylic acid transmembrane transport"/>
    <property type="evidence" value="ECO:0000266"/>
    <property type="project" value="RGD"/>
</dbReference>
<dbReference type="GO" id="GO:0060326">
    <property type="term" value="P:cell chemotaxis"/>
    <property type="evidence" value="ECO:0000315"/>
    <property type="project" value="RGD"/>
</dbReference>
<dbReference type="GO" id="GO:1904646">
    <property type="term" value="P:cellular response to amyloid-beta"/>
    <property type="evidence" value="ECO:0000266"/>
    <property type="project" value="RGD"/>
</dbReference>
<dbReference type="GO" id="GO:0015889">
    <property type="term" value="P:cobalamin transport"/>
    <property type="evidence" value="ECO:0000266"/>
    <property type="project" value="RGD"/>
</dbReference>
<dbReference type="GO" id="GO:0070729">
    <property type="term" value="P:cyclic nucleotide transport"/>
    <property type="evidence" value="ECO:0000250"/>
    <property type="project" value="UniProtKB"/>
</dbReference>
<dbReference type="GO" id="GO:0140115">
    <property type="term" value="P:export across plasma membrane"/>
    <property type="evidence" value="ECO:0000314"/>
    <property type="project" value="RGD"/>
</dbReference>
<dbReference type="GO" id="GO:0010001">
    <property type="term" value="P:glial cell differentiation"/>
    <property type="evidence" value="ECO:0000315"/>
    <property type="project" value="RGD"/>
</dbReference>
<dbReference type="GO" id="GO:0034775">
    <property type="term" value="P:glutathione transmembrane transport"/>
    <property type="evidence" value="ECO:0000315"/>
    <property type="project" value="RGD"/>
</dbReference>
<dbReference type="GO" id="GO:0071716">
    <property type="term" value="P:leukotriene transport"/>
    <property type="evidence" value="ECO:0000250"/>
    <property type="project" value="UniProtKB"/>
</dbReference>
<dbReference type="GO" id="GO:0015911">
    <property type="term" value="P:long-chain fatty acid import across plasma membrane"/>
    <property type="evidence" value="ECO:0000314"/>
    <property type="project" value="RGD"/>
</dbReference>
<dbReference type="GO" id="GO:0033700">
    <property type="term" value="P:phospholipid efflux"/>
    <property type="evidence" value="ECO:0000315"/>
    <property type="project" value="RGD"/>
</dbReference>
<dbReference type="GO" id="GO:0045332">
    <property type="term" value="P:phospholipid translocation"/>
    <property type="evidence" value="ECO:0000266"/>
    <property type="project" value="RGD"/>
</dbReference>
<dbReference type="GO" id="GO:0030335">
    <property type="term" value="P:positive regulation of cell migration"/>
    <property type="evidence" value="ECO:0000315"/>
    <property type="project" value="RGD"/>
</dbReference>
<dbReference type="GO" id="GO:0050729">
    <property type="term" value="P:positive regulation of inflammatory response"/>
    <property type="evidence" value="ECO:0000250"/>
    <property type="project" value="UniProtKB"/>
</dbReference>
<dbReference type="GO" id="GO:2001038">
    <property type="term" value="P:regulation of cellular response to drug"/>
    <property type="evidence" value="ECO:0000314"/>
    <property type="project" value="RGD"/>
</dbReference>
<dbReference type="GO" id="GO:0006979">
    <property type="term" value="P:response to oxidative stress"/>
    <property type="evidence" value="ECO:0000315"/>
    <property type="project" value="RGD"/>
</dbReference>
<dbReference type="GO" id="GO:0009410">
    <property type="term" value="P:response to xenobiotic stimulus"/>
    <property type="evidence" value="ECO:0000314"/>
    <property type="project" value="RGD"/>
</dbReference>
<dbReference type="GO" id="GO:0099039">
    <property type="term" value="P:sphingolipid translocation"/>
    <property type="evidence" value="ECO:0000266"/>
    <property type="project" value="RGD"/>
</dbReference>
<dbReference type="GO" id="GO:0070633">
    <property type="term" value="P:transepithelial transport"/>
    <property type="evidence" value="ECO:0000266"/>
    <property type="project" value="RGD"/>
</dbReference>
<dbReference type="GO" id="GO:0055085">
    <property type="term" value="P:transmembrane transport"/>
    <property type="evidence" value="ECO:0000314"/>
    <property type="project" value="RGD"/>
</dbReference>
<dbReference type="GO" id="GO:1990961">
    <property type="term" value="P:xenobiotic detoxification by transmembrane export across the plasma membrane"/>
    <property type="evidence" value="ECO:0000314"/>
    <property type="project" value="RGD"/>
</dbReference>
<dbReference type="GO" id="GO:0042908">
    <property type="term" value="P:xenobiotic transport"/>
    <property type="evidence" value="ECO:0000315"/>
    <property type="project" value="RGD"/>
</dbReference>
<dbReference type="GO" id="GO:1990962">
    <property type="term" value="P:xenobiotic transport across blood-brain barrier"/>
    <property type="evidence" value="ECO:0000266"/>
    <property type="project" value="RGD"/>
</dbReference>
<dbReference type="CDD" id="cd18595">
    <property type="entry name" value="ABC_6TM_MRP1_2_3_6_D1_like"/>
    <property type="match status" value="1"/>
</dbReference>
<dbReference type="CDD" id="cd18603">
    <property type="entry name" value="ABC_6TM_MRP1_2_3_6_D2_like"/>
    <property type="match status" value="1"/>
</dbReference>
<dbReference type="CDD" id="cd03250">
    <property type="entry name" value="ABCC_MRP_domain1"/>
    <property type="match status" value="1"/>
</dbReference>
<dbReference type="CDD" id="cd03244">
    <property type="entry name" value="ABCC_MRP_domain2"/>
    <property type="match status" value="1"/>
</dbReference>
<dbReference type="FunFam" id="3.40.50.300:FF:000293">
    <property type="entry name" value="ATP binding cassette subfamily C member 1"/>
    <property type="match status" value="1"/>
</dbReference>
<dbReference type="FunFam" id="1.20.1560.10:FF:000001">
    <property type="entry name" value="ATP-binding cassette subfamily C member 1"/>
    <property type="match status" value="1"/>
</dbReference>
<dbReference type="FunFam" id="1.20.1560.10:FF:000007">
    <property type="entry name" value="ATP-binding cassette subfamily C member 1"/>
    <property type="match status" value="1"/>
</dbReference>
<dbReference type="FunFam" id="3.40.50.300:FF:000074">
    <property type="entry name" value="Multidrug resistance-associated protein 5 isoform 1"/>
    <property type="match status" value="1"/>
</dbReference>
<dbReference type="Gene3D" id="1.20.1560.10">
    <property type="entry name" value="ABC transporter type 1, transmembrane domain"/>
    <property type="match status" value="2"/>
</dbReference>
<dbReference type="Gene3D" id="3.40.50.300">
    <property type="entry name" value="P-loop containing nucleotide triphosphate hydrolases"/>
    <property type="match status" value="2"/>
</dbReference>
<dbReference type="InterPro" id="IPR003593">
    <property type="entry name" value="AAA+_ATPase"/>
</dbReference>
<dbReference type="InterPro" id="IPR011527">
    <property type="entry name" value="ABC1_TM_dom"/>
</dbReference>
<dbReference type="InterPro" id="IPR036640">
    <property type="entry name" value="ABC1_TM_sf"/>
</dbReference>
<dbReference type="InterPro" id="IPR003439">
    <property type="entry name" value="ABC_transporter-like_ATP-bd"/>
</dbReference>
<dbReference type="InterPro" id="IPR017871">
    <property type="entry name" value="ABC_transporter-like_CS"/>
</dbReference>
<dbReference type="InterPro" id="IPR050173">
    <property type="entry name" value="ABC_transporter_C-like"/>
</dbReference>
<dbReference type="InterPro" id="IPR018170">
    <property type="entry name" value="Aldo/ket_reductase_CS"/>
</dbReference>
<dbReference type="InterPro" id="IPR005292">
    <property type="entry name" value="MRP"/>
</dbReference>
<dbReference type="InterPro" id="IPR027417">
    <property type="entry name" value="P-loop_NTPase"/>
</dbReference>
<dbReference type="InterPro" id="IPR056227">
    <property type="entry name" value="TMD0_ABC"/>
</dbReference>
<dbReference type="NCBIfam" id="TIGR00957">
    <property type="entry name" value="MRP_assoc_pro"/>
    <property type="match status" value="1"/>
</dbReference>
<dbReference type="PANTHER" id="PTHR24223">
    <property type="entry name" value="ATP-BINDING CASSETTE SUB-FAMILY C"/>
    <property type="match status" value="1"/>
</dbReference>
<dbReference type="PANTHER" id="PTHR24223:SF241">
    <property type="entry name" value="MULTIDRUG RESISTANCE-ASSOCIATED PROTEIN 1"/>
    <property type="match status" value="1"/>
</dbReference>
<dbReference type="Pfam" id="PF00664">
    <property type="entry name" value="ABC_membrane"/>
    <property type="match status" value="2"/>
</dbReference>
<dbReference type="Pfam" id="PF00005">
    <property type="entry name" value="ABC_tran"/>
    <property type="match status" value="2"/>
</dbReference>
<dbReference type="Pfam" id="PF24357">
    <property type="entry name" value="TMD0_ABC"/>
    <property type="match status" value="1"/>
</dbReference>
<dbReference type="SMART" id="SM00382">
    <property type="entry name" value="AAA"/>
    <property type="match status" value="2"/>
</dbReference>
<dbReference type="SUPFAM" id="SSF90123">
    <property type="entry name" value="ABC transporter transmembrane region"/>
    <property type="match status" value="2"/>
</dbReference>
<dbReference type="SUPFAM" id="SSF52540">
    <property type="entry name" value="P-loop containing nucleoside triphosphate hydrolases"/>
    <property type="match status" value="2"/>
</dbReference>
<dbReference type="PROSITE" id="PS50929">
    <property type="entry name" value="ABC_TM1F"/>
    <property type="match status" value="2"/>
</dbReference>
<dbReference type="PROSITE" id="PS00211">
    <property type="entry name" value="ABC_TRANSPORTER_1"/>
    <property type="match status" value="2"/>
</dbReference>
<dbReference type="PROSITE" id="PS50893">
    <property type="entry name" value="ABC_TRANSPORTER_2"/>
    <property type="match status" value="2"/>
</dbReference>
<dbReference type="PROSITE" id="PS00063">
    <property type="entry name" value="ALDOKETO_REDUCTASE_3"/>
    <property type="match status" value="1"/>
</dbReference>
<protein>
    <recommendedName>
        <fullName evidence="11">Multidrug resistance-associated protein 1</fullName>
        <ecNumber evidence="3">7.6.2.2</ecNumber>
    </recommendedName>
    <alternativeName>
        <fullName>ATP-binding cassette sub-family C member 1</fullName>
    </alternativeName>
    <alternativeName>
        <fullName evidence="2">Glutathione-S-conjugate-translocating ATPase ABCC1</fullName>
        <ecNumber evidence="2">7.6.2.3</ecNumber>
    </alternativeName>
    <alternativeName>
        <fullName>Leukotriene C(4) transporter</fullName>
        <shortName>LTC4 transporter</shortName>
    </alternativeName>
</protein>
<evidence type="ECO:0000250" key="1"/>
<evidence type="ECO:0000250" key="2">
    <source>
        <dbReference type="UniProtKB" id="O35379"/>
    </source>
</evidence>
<evidence type="ECO:0000250" key="3">
    <source>
        <dbReference type="UniProtKB" id="P33527"/>
    </source>
</evidence>
<evidence type="ECO:0000255" key="4"/>
<evidence type="ECO:0000255" key="5">
    <source>
        <dbReference type="PROSITE-ProRule" id="PRU00434"/>
    </source>
</evidence>
<evidence type="ECO:0000255" key="6">
    <source>
        <dbReference type="PROSITE-ProRule" id="PRU00441"/>
    </source>
</evidence>
<evidence type="ECO:0000269" key="7">
    <source>
    </source>
</evidence>
<evidence type="ECO:0000269" key="8">
    <source>
    </source>
</evidence>
<evidence type="ECO:0000269" key="9">
    <source>
    </source>
</evidence>
<evidence type="ECO:0000303" key="10">
    <source ref="4"/>
</evidence>
<evidence type="ECO:0000305" key="11"/>
<evidence type="ECO:0000312" key="12">
    <source>
        <dbReference type="RGD" id="3112"/>
    </source>
</evidence>
<evidence type="ECO:0007744" key="13">
    <source>
    </source>
</evidence>
<reference key="1">
    <citation type="journal article" date="2002" name="AAPS PharmSci">
        <title>Cloning and characterization of the rat multidrug resistance-associated protein 1.</title>
        <authorList>
            <person name="Yang Z."/>
            <person name="Li C.S.W."/>
            <person name="Shen D.D."/>
            <person name="Ho R.J.Y."/>
        </authorList>
    </citation>
    <scope>NUCLEOTIDE SEQUENCE [MRNA] (ISOFORM 1)</scope>
    <source>
        <strain>Sprague-Dawley</strain>
        <tissue>Brain</tissue>
    </source>
</reference>
<reference key="2">
    <citation type="journal article" date="2003" name="Drug Metab. Dispos.">
        <title>Molecular cloning and pharmacological characterization of rat multidrug resistance protein 1 (mrp1).</title>
        <authorList>
            <person name="Nunoya K."/>
            <person name="Grant C.E."/>
            <person name="Zhang D.-W."/>
            <person name="Cole S.P.C."/>
            <person name="Deeley R.G."/>
        </authorList>
    </citation>
    <scope>NUCLEOTIDE SEQUENCE [MRNA] (ISOFORM 1)</scope>
    <scope>TISSUE SPECIFICITY</scope>
    <scope>MUTAGENESIS OF LEU-983; GLN-1090; SER-1101; VAL-1106 AND ALA-1243</scope>
    <source>
        <strain>Sprague-Dawley</strain>
        <tissue>Skeletal muscle</tissue>
    </source>
</reference>
<reference key="3">
    <citation type="submission" date="2002-02" db="EMBL/GenBank/DDBJ databases">
        <authorList>
            <person name="Yabuuchi H."/>
            <person name="Takayanagi S."/>
            <person name="Ishikawa T."/>
        </authorList>
    </citation>
    <scope>NUCLEOTIDE SEQUENCE [MRNA] (ISOFORM 1)</scope>
    <source>
        <strain>Sprague-Dawley</strain>
        <tissue>Spleen</tissue>
    </source>
</reference>
<reference key="4">
    <citation type="submission" date="2002-11" db="EMBL/GenBank/DDBJ databases">
        <authorList>
            <person name="Takayanagi S."/>
            <person name="Ishikawa T."/>
        </authorList>
    </citation>
    <scope>NUCLEOTIDE SEQUENCE [MRNA] (ISOFORM 2)</scope>
    <source>
        <strain>Sprague-Dawley</strain>
        <tissue>Spleen</tissue>
    </source>
</reference>
<reference key="5">
    <citation type="journal article" date="2001" name="J. Neurochem.">
        <title>The multidrug resistance protein MRP1 mediates the release of glutathione disulfide from rat astrocytes during oxidative stress.</title>
        <authorList>
            <person name="Hirrlinger J."/>
            <person name="Koenig J."/>
            <person name="Keppler D."/>
            <person name="Lindenau J."/>
            <person name="Schulz J.B."/>
            <person name="Dringen R."/>
        </authorList>
    </citation>
    <scope>NUCLEOTIDE SEQUENCE [MRNA] OF 711-1532 (ISOFORM 1)</scope>
</reference>
<reference key="6">
    <citation type="journal article" date="1996" name="J. Biol. Chem.">
        <title>cDNA cloning of the hepatocyte canalicular isoform of the multidrug resistance protein, cMrp, reveals a novel conjugate export pump deficient in hyperbilirubinemic mutant rats.</title>
        <authorList>
            <person name="Buechler M."/>
            <person name="Koenig J."/>
            <person name="Brom M."/>
            <person name="Kartenbeck J."/>
            <person name="Spring H."/>
            <person name="Horie T."/>
            <person name="Keppler D."/>
        </authorList>
    </citation>
    <scope>NUCLEOTIDE SEQUENCE [MRNA] OF 1426-1532 (ISOFORMS 1/2)</scope>
</reference>
<reference key="7">
    <citation type="journal article" date="2004" name="NeuroReport">
        <title>Multidrug resistance protein 1-mediated transport of saquinavir by microglia.</title>
        <authorList>
            <person name="Dallas S."/>
            <person name="Ronaldson P.T."/>
            <person name="Bendayan M."/>
            <person name="Bendayan R."/>
        </authorList>
    </citation>
    <scope>FUNCTION</scope>
    <scope>SUBCELLULAR LOCATION</scope>
</reference>
<reference key="8">
    <citation type="journal article" date="2006" name="Proc. Natl. Acad. Sci. U.S.A.">
        <title>Role of ABCC1 in export of sphingosine-1-phosphate from mast cells.</title>
        <authorList>
            <person name="Mitra P."/>
            <person name="Oskeritzian C.A."/>
            <person name="Payne S.G."/>
            <person name="Beaven M.A."/>
            <person name="Milstien S."/>
            <person name="Spiegel S."/>
        </authorList>
    </citation>
    <scope>CATALYTIC ACTIVITY</scope>
    <scope>ACTIVITY REGULATION</scope>
    <scope>FUNCTION</scope>
</reference>
<reference key="9">
    <citation type="journal article" date="2012" name="Nat. Commun.">
        <title>Quantitative maps of protein phosphorylation sites across 14 different rat organs and tissues.</title>
        <authorList>
            <person name="Lundby A."/>
            <person name="Secher A."/>
            <person name="Lage K."/>
            <person name="Nordsborg N.B."/>
            <person name="Dmytriyev A."/>
            <person name="Lundby C."/>
            <person name="Olsen J.V."/>
        </authorList>
    </citation>
    <scope>PHOSPHORYLATION [LARGE SCALE ANALYSIS] AT SER-879</scope>
    <scope>IDENTIFICATION BY MASS SPECTROMETRY [LARGE SCALE ANALYSIS]</scope>
</reference>
<feature type="chain" id="PRO_0000093354" description="Multidrug resistance-associated protein 1">
    <location>
        <begin position="1"/>
        <end position="1532"/>
    </location>
</feature>
<feature type="topological domain" description="Extracellular" evidence="1">
    <location>
        <begin position="1"/>
        <end position="33"/>
    </location>
</feature>
<feature type="transmembrane region" description="Helical; Name=1" evidence="6">
    <location>
        <begin position="34"/>
        <end position="54"/>
    </location>
</feature>
<feature type="topological domain" description="Cytoplasmic" evidence="1">
    <location>
        <begin position="55"/>
        <end position="74"/>
    </location>
</feature>
<feature type="transmembrane region" description="Helical; Name=2" evidence="6">
    <location>
        <begin position="75"/>
        <end position="95"/>
    </location>
</feature>
<feature type="topological domain" description="Extracellular" evidence="1">
    <location>
        <begin position="96"/>
        <end position="100"/>
    </location>
</feature>
<feature type="transmembrane region" description="Helical; Name=3" evidence="6">
    <location>
        <begin position="101"/>
        <end position="121"/>
    </location>
</feature>
<feature type="topological domain" description="Cytoplasmic" evidence="1">
    <location>
        <begin position="122"/>
        <end position="133"/>
    </location>
</feature>
<feature type="transmembrane region" description="Helical; Name=4" evidence="6">
    <location>
        <begin position="134"/>
        <end position="154"/>
    </location>
</feature>
<feature type="topological domain" description="Extracellular" evidence="1">
    <location>
        <begin position="155"/>
        <end position="172"/>
    </location>
</feature>
<feature type="transmembrane region" description="Helical; Name=5" evidence="6">
    <location>
        <begin position="173"/>
        <end position="193"/>
    </location>
</feature>
<feature type="topological domain" description="Cytoplasmic" evidence="1">
    <location>
        <begin position="194"/>
        <end position="317"/>
    </location>
</feature>
<feature type="transmembrane region" description="Helical; Name=6" evidence="6">
    <location>
        <begin position="318"/>
        <end position="338"/>
    </location>
</feature>
<feature type="topological domain" description="Extracellular" evidence="1">
    <location>
        <begin position="339"/>
        <end position="364"/>
    </location>
</feature>
<feature type="transmembrane region" description="Helical; Name=7" evidence="6">
    <location>
        <begin position="365"/>
        <end position="385"/>
    </location>
</feature>
<feature type="topological domain" description="Cytoplasmic" evidence="1">
    <location>
        <begin position="386"/>
        <end position="441"/>
    </location>
</feature>
<feature type="transmembrane region" description="Helical; Name=8" evidence="6">
    <location>
        <begin position="442"/>
        <end position="462"/>
    </location>
</feature>
<feature type="topological domain" description="Extracellular" evidence="1">
    <location>
        <begin position="463"/>
        <end position="465"/>
    </location>
</feature>
<feature type="transmembrane region" description="Helical; Name=9" evidence="6">
    <location>
        <begin position="466"/>
        <end position="486"/>
    </location>
</feature>
<feature type="topological domain" description="Cytoplasmic" evidence="1">
    <location>
        <begin position="487"/>
        <end position="548"/>
    </location>
</feature>
<feature type="transmembrane region" description="Helical; Name=10" evidence="6">
    <location>
        <begin position="549"/>
        <end position="569"/>
    </location>
</feature>
<feature type="topological domain" description="Extracellular" evidence="1">
    <location>
        <begin position="570"/>
        <end position="591"/>
    </location>
</feature>
<feature type="transmembrane region" description="Helical; Name=11" evidence="6">
    <location>
        <begin position="592"/>
        <end position="612"/>
    </location>
</feature>
<feature type="topological domain" description="Cytoplasmic" evidence="1">
    <location>
        <begin position="613"/>
        <end position="967"/>
    </location>
</feature>
<feature type="transmembrane region" description="Helical; Name=12" evidence="6">
    <location>
        <begin position="968"/>
        <end position="988"/>
    </location>
</feature>
<feature type="topological domain" description="Extracellular" evidence="1">
    <location>
        <begin position="989"/>
        <end position="1026"/>
    </location>
</feature>
<feature type="transmembrane region" description="Helical; Name=13" evidence="6">
    <location>
        <begin position="1027"/>
        <end position="1047"/>
    </location>
</feature>
<feature type="topological domain" description="Cytoplasmic" evidence="1">
    <location>
        <begin position="1048"/>
        <end position="1090"/>
    </location>
</feature>
<feature type="transmembrane region" description="Helical; Name=14" evidence="6">
    <location>
        <begin position="1091"/>
        <end position="1111"/>
    </location>
</feature>
<feature type="topological domain" description="Extracellular" evidence="1">
    <location>
        <position position="1112"/>
    </location>
</feature>
<feature type="transmembrane region" description="Helical; Name=15" evidence="6">
    <location>
        <begin position="1113"/>
        <end position="1133"/>
    </location>
</feature>
<feature type="topological domain" description="Cytoplasmic" evidence="1">
    <location>
        <begin position="1134"/>
        <end position="1204"/>
    </location>
</feature>
<feature type="transmembrane region" description="Helical; Name=16" evidence="6">
    <location>
        <begin position="1205"/>
        <end position="1225"/>
    </location>
</feature>
<feature type="topological domain" description="Extracellular" evidence="1">
    <location>
        <begin position="1226"/>
        <end position="1227"/>
    </location>
</feature>
<feature type="transmembrane region" description="Helical; Name=17" evidence="6">
    <location>
        <begin position="1228"/>
        <end position="1248"/>
    </location>
</feature>
<feature type="topological domain" description="Cytoplasmic" evidence="1">
    <location>
        <begin position="1249"/>
        <end position="1532"/>
    </location>
</feature>
<feature type="domain" description="ABC transmembrane type-1 1" evidence="6">
    <location>
        <begin position="326"/>
        <end position="609"/>
    </location>
</feature>
<feature type="domain" description="ABC transporter 1" evidence="5">
    <location>
        <begin position="645"/>
        <end position="869"/>
    </location>
</feature>
<feature type="domain" description="ABC transmembrane type-1 2" evidence="6">
    <location>
        <begin position="975"/>
        <end position="1257"/>
    </location>
</feature>
<feature type="domain" description="ABC transporter 2" evidence="5">
    <location>
        <begin position="1294"/>
        <end position="1528"/>
    </location>
</feature>
<feature type="binding site" evidence="5">
    <location>
        <begin position="679"/>
        <end position="686"/>
    </location>
    <ligand>
        <name>ATP</name>
        <dbReference type="ChEBI" id="CHEBI:30616"/>
        <label>1</label>
    </ligand>
</feature>
<feature type="binding site" evidence="5">
    <location>
        <begin position="1328"/>
        <end position="1335"/>
    </location>
    <ligand>
        <name>ATP</name>
        <dbReference type="ChEBI" id="CHEBI:30616"/>
        <label>2</label>
    </ligand>
</feature>
<feature type="modified residue" description="Phosphotyrosine" evidence="2">
    <location>
        <position position="277"/>
    </location>
</feature>
<feature type="modified residue" description="Phosphoserine" evidence="2">
    <location>
        <position position="290"/>
    </location>
</feature>
<feature type="modified residue" description="N6-succinyllysine" evidence="2">
    <location>
        <position position="504"/>
    </location>
</feature>
<feature type="modified residue" description="Phosphoserine" evidence="13">
    <location>
        <position position="879"/>
    </location>
</feature>
<feature type="modified residue" description="Phosphoserine" evidence="2">
    <location>
        <position position="883"/>
    </location>
</feature>
<feature type="modified residue" description="Phosphoserine" evidence="3">
    <location>
        <position position="916"/>
    </location>
</feature>
<feature type="modified residue" description="Phosphoserine" evidence="3">
    <location>
        <position position="931"/>
    </location>
</feature>
<feature type="glycosylation site" description="N-linked (GlcNAc...) asparagine" evidence="4">
    <location>
        <position position="19"/>
    </location>
</feature>
<feature type="splice variant" id="VSP_017015" description="In isoform 2." evidence="10">
    <location>
        <begin position="912"/>
        <end position="920"/>
    </location>
</feature>
<feature type="mutagenesis site" description="No effect on estradiol glucuronide transport." evidence="7">
    <original>L</original>
    <variation>M</variation>
    <location>
        <position position="983"/>
    </location>
</feature>
<feature type="mutagenesis site" description="7.6-fold increase of the estradiol glucuronide transport; when associated with T-1243. Increases doxorubicin inhibition." evidence="7">
    <original>Q</original>
    <variation>E</variation>
    <location>
        <position position="1090"/>
    </location>
</feature>
<feature type="mutagenesis site" description="50% increase of estradiol glucuronide transport." evidence="7">
    <original>S</original>
    <variation>N</variation>
    <location>
        <position position="1101"/>
    </location>
</feature>
<feature type="mutagenesis site" description="No effect on estradiol glucuronide transport." evidence="7">
    <original>V</original>
    <variation>C</variation>
    <location>
        <position position="1106"/>
    </location>
</feature>
<feature type="mutagenesis site" description="7.6-fold increase of the estradiol glucuronide transport; when associated with E-1090." evidence="7">
    <original>A</original>
    <variation>T</variation>
    <location>
        <position position="1243"/>
    </location>
</feature>
<feature type="sequence conflict" description="In Ref. 1; AAN86532 and 4; AAO44983." evidence="11" ref="1 4">
    <original>S</original>
    <variation>R</variation>
    <location>
        <position position="4"/>
    </location>
</feature>
<feature type="sequence conflict" description="In Ref. 4; AAO44983." evidence="11" ref="4">
    <original>F</original>
    <variation>S</variation>
    <location>
        <position position="480"/>
    </location>
</feature>
<feature type="sequence conflict" description="In Ref. 5; CAB97204." evidence="11" ref="5">
    <original>N</original>
    <variation>S</variation>
    <location>
        <position position="820"/>
    </location>
</feature>
<feature type="sequence conflict" description="In Ref. 5; CAB97204." evidence="11" ref="5">
    <original>R</original>
    <variation>P</variation>
    <location>
        <position position="868"/>
    </location>
</feature>
<feature type="sequence conflict" description="In Ref. 5; CAB97204." evidence="11" ref="5">
    <original>S</original>
    <variation>G</variation>
    <location>
        <position position="916"/>
    </location>
</feature>
<feature type="sequence conflict" description="In Ref. 5; CAB97204." evidence="11" ref="5">
    <original>P</original>
    <variation>T</variation>
    <location>
        <position position="1122"/>
    </location>
</feature>
<feature type="sequence conflict" description="In Ref. 1; AAN86532." evidence="11" ref="1">
    <original>S</original>
    <variation>P</variation>
    <location>
        <position position="1382"/>
    </location>
</feature>
<feature type="sequence conflict" description="In Ref. 1; AAN86532." evidence="11" ref="1">
    <original>I</original>
    <variation>V</variation>
    <location>
        <position position="1473"/>
    </location>
</feature>
<name>MRP1_RAT</name>
<gene>
    <name evidence="12" type="primary">Abcc1</name>
    <name type="synonym">Mrp1</name>
</gene>
<proteinExistence type="evidence at protein level"/>
<organism>
    <name type="scientific">Rattus norvegicus</name>
    <name type="common">Rat</name>
    <dbReference type="NCBI Taxonomy" id="10116"/>
    <lineage>
        <taxon>Eukaryota</taxon>
        <taxon>Metazoa</taxon>
        <taxon>Chordata</taxon>
        <taxon>Craniata</taxon>
        <taxon>Vertebrata</taxon>
        <taxon>Euteleostomi</taxon>
        <taxon>Mammalia</taxon>
        <taxon>Eutheria</taxon>
        <taxon>Euarchontoglires</taxon>
        <taxon>Glires</taxon>
        <taxon>Rodentia</taxon>
        <taxon>Myomorpha</taxon>
        <taxon>Muroidea</taxon>
        <taxon>Muridae</taxon>
        <taxon>Murinae</taxon>
        <taxon>Rattus</taxon>
    </lineage>
</organism>
<keyword id="KW-0025">Alternative splicing</keyword>
<keyword id="KW-0067">ATP-binding</keyword>
<keyword id="KW-1003">Cell membrane</keyword>
<keyword id="KW-0325">Glycoprotein</keyword>
<keyword id="KW-0378">Hydrolase</keyword>
<keyword id="KW-0445">Lipid transport</keyword>
<keyword id="KW-0472">Membrane</keyword>
<keyword id="KW-0547">Nucleotide-binding</keyword>
<keyword id="KW-0597">Phosphoprotein</keyword>
<keyword id="KW-1185">Reference proteome</keyword>
<keyword id="KW-0677">Repeat</keyword>
<keyword id="KW-1278">Translocase</keyword>
<keyword id="KW-0812">Transmembrane</keyword>
<keyword id="KW-1133">Transmembrane helix</keyword>
<keyword id="KW-0813">Transport</keyword>